<name>RL19_CAMJR</name>
<accession>Q5HV67</accession>
<reference key="1">
    <citation type="journal article" date="2005" name="PLoS Biol.">
        <title>Major structural differences and novel potential virulence mechanisms from the genomes of multiple Campylobacter species.</title>
        <authorList>
            <person name="Fouts D.E."/>
            <person name="Mongodin E.F."/>
            <person name="Mandrell R.E."/>
            <person name="Miller W.G."/>
            <person name="Rasko D.A."/>
            <person name="Ravel J."/>
            <person name="Brinkac L.M."/>
            <person name="DeBoy R.T."/>
            <person name="Parker C.T."/>
            <person name="Daugherty S.C."/>
            <person name="Dodson R.J."/>
            <person name="Durkin A.S."/>
            <person name="Madupu R."/>
            <person name="Sullivan S.A."/>
            <person name="Shetty J.U."/>
            <person name="Ayodeji M.A."/>
            <person name="Shvartsbeyn A."/>
            <person name="Schatz M.C."/>
            <person name="Badger J.H."/>
            <person name="Fraser C.M."/>
            <person name="Nelson K.E."/>
        </authorList>
    </citation>
    <scope>NUCLEOTIDE SEQUENCE [LARGE SCALE GENOMIC DNA]</scope>
    <source>
        <strain>RM1221</strain>
    </source>
</reference>
<evidence type="ECO:0000255" key="1">
    <source>
        <dbReference type="HAMAP-Rule" id="MF_00402"/>
    </source>
</evidence>
<evidence type="ECO:0000305" key="2"/>
<dbReference type="EMBL" id="CP000025">
    <property type="protein sequence ID" value="AAW34599.1"/>
    <property type="molecule type" value="Genomic_DNA"/>
</dbReference>
<dbReference type="RefSeq" id="WP_002852307.1">
    <property type="nucleotide sequence ID" value="NC_003912.7"/>
</dbReference>
<dbReference type="SMR" id="Q5HV67"/>
<dbReference type="KEGG" id="cjr:CJE0814"/>
<dbReference type="HOGENOM" id="CLU_103507_2_2_7"/>
<dbReference type="GO" id="GO:0022625">
    <property type="term" value="C:cytosolic large ribosomal subunit"/>
    <property type="evidence" value="ECO:0007669"/>
    <property type="project" value="TreeGrafter"/>
</dbReference>
<dbReference type="GO" id="GO:0003735">
    <property type="term" value="F:structural constituent of ribosome"/>
    <property type="evidence" value="ECO:0007669"/>
    <property type="project" value="InterPro"/>
</dbReference>
<dbReference type="GO" id="GO:0006412">
    <property type="term" value="P:translation"/>
    <property type="evidence" value="ECO:0007669"/>
    <property type="project" value="UniProtKB-UniRule"/>
</dbReference>
<dbReference type="FunFam" id="2.30.30.790:FF:000001">
    <property type="entry name" value="50S ribosomal protein L19"/>
    <property type="match status" value="1"/>
</dbReference>
<dbReference type="Gene3D" id="2.30.30.790">
    <property type="match status" value="1"/>
</dbReference>
<dbReference type="HAMAP" id="MF_00402">
    <property type="entry name" value="Ribosomal_bL19"/>
    <property type="match status" value="1"/>
</dbReference>
<dbReference type="InterPro" id="IPR001857">
    <property type="entry name" value="Ribosomal_bL19"/>
</dbReference>
<dbReference type="InterPro" id="IPR018257">
    <property type="entry name" value="Ribosomal_bL19_CS"/>
</dbReference>
<dbReference type="InterPro" id="IPR038657">
    <property type="entry name" value="Ribosomal_bL19_sf"/>
</dbReference>
<dbReference type="InterPro" id="IPR008991">
    <property type="entry name" value="Translation_prot_SH3-like_sf"/>
</dbReference>
<dbReference type="NCBIfam" id="TIGR01024">
    <property type="entry name" value="rplS_bact"/>
    <property type="match status" value="1"/>
</dbReference>
<dbReference type="PANTHER" id="PTHR15680:SF9">
    <property type="entry name" value="LARGE RIBOSOMAL SUBUNIT PROTEIN BL19M"/>
    <property type="match status" value="1"/>
</dbReference>
<dbReference type="PANTHER" id="PTHR15680">
    <property type="entry name" value="RIBOSOMAL PROTEIN L19"/>
    <property type="match status" value="1"/>
</dbReference>
<dbReference type="Pfam" id="PF01245">
    <property type="entry name" value="Ribosomal_L19"/>
    <property type="match status" value="1"/>
</dbReference>
<dbReference type="PIRSF" id="PIRSF002191">
    <property type="entry name" value="Ribosomal_L19"/>
    <property type="match status" value="1"/>
</dbReference>
<dbReference type="PRINTS" id="PR00061">
    <property type="entry name" value="RIBOSOMALL19"/>
</dbReference>
<dbReference type="SUPFAM" id="SSF50104">
    <property type="entry name" value="Translation proteins SH3-like domain"/>
    <property type="match status" value="1"/>
</dbReference>
<dbReference type="PROSITE" id="PS01015">
    <property type="entry name" value="RIBOSOMAL_L19"/>
    <property type="match status" value="1"/>
</dbReference>
<comment type="function">
    <text evidence="1">This protein is located at the 30S-50S ribosomal subunit interface and may play a role in the structure and function of the aminoacyl-tRNA binding site.</text>
</comment>
<comment type="similarity">
    <text evidence="1">Belongs to the bacterial ribosomal protein bL19 family.</text>
</comment>
<proteinExistence type="inferred from homology"/>
<keyword id="KW-0687">Ribonucleoprotein</keyword>
<keyword id="KW-0689">Ribosomal protein</keyword>
<protein>
    <recommendedName>
        <fullName evidence="1">Large ribosomal subunit protein bL19</fullName>
    </recommendedName>
    <alternativeName>
        <fullName evidence="2">50S ribosomal protein L19</fullName>
    </alternativeName>
</protein>
<feature type="chain" id="PRO_0000163432" description="Large ribosomal subunit protein bL19">
    <location>
        <begin position="1"/>
        <end position="118"/>
    </location>
</feature>
<organism>
    <name type="scientific">Campylobacter jejuni (strain RM1221)</name>
    <dbReference type="NCBI Taxonomy" id="195099"/>
    <lineage>
        <taxon>Bacteria</taxon>
        <taxon>Pseudomonadati</taxon>
        <taxon>Campylobacterota</taxon>
        <taxon>Epsilonproteobacteria</taxon>
        <taxon>Campylobacterales</taxon>
        <taxon>Campylobacteraceae</taxon>
        <taxon>Campylobacter</taxon>
    </lineage>
</organism>
<gene>
    <name evidence="1" type="primary">rplS</name>
    <name type="ordered locus">CJE0814</name>
</gene>
<sequence length="118" mass="13682">MKNKYIEQFEAKQIEGKNVPDFRAGDTLKLAIRIKEGDKTRIQNFEGICIARRGNGVSETFIVRKIGANNVGVERIFPIYSESLESITVLRRGRVRRARLFYLRDRRGKAARIKELKK</sequence>